<protein>
    <recommendedName>
        <fullName evidence="1">Indole-3-glycerol phosphate synthase</fullName>
        <shortName evidence="1">IGPS</shortName>
        <ecNumber evidence="1">4.1.1.48</ecNumber>
    </recommendedName>
</protein>
<organism>
    <name type="scientific">Ruminiclostridium cellulolyticum (strain ATCC 35319 / DSM 5812 / JCM 6584 / H10)</name>
    <name type="common">Clostridium cellulolyticum</name>
    <dbReference type="NCBI Taxonomy" id="394503"/>
    <lineage>
        <taxon>Bacteria</taxon>
        <taxon>Bacillati</taxon>
        <taxon>Bacillota</taxon>
        <taxon>Clostridia</taxon>
        <taxon>Eubacteriales</taxon>
        <taxon>Oscillospiraceae</taxon>
        <taxon>Ruminiclostridium</taxon>
    </lineage>
</organism>
<feature type="chain" id="PRO_1000198771" description="Indole-3-glycerol phosphate synthase">
    <location>
        <begin position="1"/>
        <end position="260"/>
    </location>
</feature>
<dbReference type="EC" id="4.1.1.48" evidence="1"/>
<dbReference type="EMBL" id="CP001348">
    <property type="protein sequence ID" value="ACL77506.1"/>
    <property type="molecule type" value="Genomic_DNA"/>
</dbReference>
<dbReference type="RefSeq" id="WP_015926564.1">
    <property type="nucleotide sequence ID" value="NC_011898.1"/>
</dbReference>
<dbReference type="SMR" id="B8I0V0"/>
<dbReference type="STRING" id="394503.Ccel_3216"/>
<dbReference type="KEGG" id="cce:Ccel_3216"/>
<dbReference type="eggNOG" id="COG0134">
    <property type="taxonomic scope" value="Bacteria"/>
</dbReference>
<dbReference type="HOGENOM" id="CLU_034247_2_0_9"/>
<dbReference type="OrthoDB" id="9804217at2"/>
<dbReference type="UniPathway" id="UPA00035">
    <property type="reaction ID" value="UER00043"/>
</dbReference>
<dbReference type="Proteomes" id="UP000001349">
    <property type="component" value="Chromosome"/>
</dbReference>
<dbReference type="GO" id="GO:0004425">
    <property type="term" value="F:indole-3-glycerol-phosphate synthase activity"/>
    <property type="evidence" value="ECO:0007669"/>
    <property type="project" value="UniProtKB-UniRule"/>
</dbReference>
<dbReference type="GO" id="GO:0004640">
    <property type="term" value="F:phosphoribosylanthranilate isomerase activity"/>
    <property type="evidence" value="ECO:0007669"/>
    <property type="project" value="TreeGrafter"/>
</dbReference>
<dbReference type="GO" id="GO:0000162">
    <property type="term" value="P:L-tryptophan biosynthetic process"/>
    <property type="evidence" value="ECO:0007669"/>
    <property type="project" value="UniProtKB-UniRule"/>
</dbReference>
<dbReference type="CDD" id="cd00331">
    <property type="entry name" value="IGPS"/>
    <property type="match status" value="1"/>
</dbReference>
<dbReference type="FunFam" id="3.20.20.70:FF:000024">
    <property type="entry name" value="Indole-3-glycerol phosphate synthase"/>
    <property type="match status" value="1"/>
</dbReference>
<dbReference type="Gene3D" id="3.20.20.70">
    <property type="entry name" value="Aldolase class I"/>
    <property type="match status" value="1"/>
</dbReference>
<dbReference type="HAMAP" id="MF_00134_B">
    <property type="entry name" value="IGPS_B"/>
    <property type="match status" value="1"/>
</dbReference>
<dbReference type="InterPro" id="IPR013785">
    <property type="entry name" value="Aldolase_TIM"/>
</dbReference>
<dbReference type="InterPro" id="IPR045186">
    <property type="entry name" value="Indole-3-glycerol_P_synth"/>
</dbReference>
<dbReference type="InterPro" id="IPR013798">
    <property type="entry name" value="Indole-3-glycerol_P_synth_dom"/>
</dbReference>
<dbReference type="InterPro" id="IPR001468">
    <property type="entry name" value="Indole-3-GlycerolPSynthase_CS"/>
</dbReference>
<dbReference type="InterPro" id="IPR011060">
    <property type="entry name" value="RibuloseP-bd_barrel"/>
</dbReference>
<dbReference type="NCBIfam" id="NF001377">
    <property type="entry name" value="PRK00278.2-4"/>
    <property type="match status" value="1"/>
</dbReference>
<dbReference type="PANTHER" id="PTHR22854:SF2">
    <property type="entry name" value="INDOLE-3-GLYCEROL-PHOSPHATE SYNTHASE"/>
    <property type="match status" value="1"/>
</dbReference>
<dbReference type="PANTHER" id="PTHR22854">
    <property type="entry name" value="TRYPTOPHAN BIOSYNTHESIS PROTEIN"/>
    <property type="match status" value="1"/>
</dbReference>
<dbReference type="Pfam" id="PF00218">
    <property type="entry name" value="IGPS"/>
    <property type="match status" value="1"/>
</dbReference>
<dbReference type="SUPFAM" id="SSF51366">
    <property type="entry name" value="Ribulose-phoshate binding barrel"/>
    <property type="match status" value="1"/>
</dbReference>
<dbReference type="PROSITE" id="PS00614">
    <property type="entry name" value="IGPS"/>
    <property type="match status" value="1"/>
</dbReference>
<gene>
    <name evidence="1" type="primary">trpC</name>
    <name type="ordered locus">Ccel_3216</name>
</gene>
<reference key="1">
    <citation type="submission" date="2009-01" db="EMBL/GenBank/DDBJ databases">
        <title>Complete sequence of Clostridium cellulolyticum H10.</title>
        <authorList>
            <consortium name="US DOE Joint Genome Institute"/>
            <person name="Lucas S."/>
            <person name="Copeland A."/>
            <person name="Lapidus A."/>
            <person name="Glavina del Rio T."/>
            <person name="Dalin E."/>
            <person name="Tice H."/>
            <person name="Bruce D."/>
            <person name="Goodwin L."/>
            <person name="Pitluck S."/>
            <person name="Chertkov O."/>
            <person name="Saunders E."/>
            <person name="Brettin T."/>
            <person name="Detter J.C."/>
            <person name="Han C."/>
            <person name="Larimer F."/>
            <person name="Land M."/>
            <person name="Hauser L."/>
            <person name="Kyrpides N."/>
            <person name="Ivanova N."/>
            <person name="Zhou J."/>
            <person name="Richardson P."/>
        </authorList>
    </citation>
    <scope>NUCLEOTIDE SEQUENCE [LARGE SCALE GENOMIC DNA]</scope>
    <source>
        <strain>ATCC 35319 / DSM 5812 / JCM 6584 / H10</strain>
    </source>
</reference>
<accession>B8I0V0</accession>
<keyword id="KW-0028">Amino-acid biosynthesis</keyword>
<keyword id="KW-0057">Aromatic amino acid biosynthesis</keyword>
<keyword id="KW-0210">Decarboxylase</keyword>
<keyword id="KW-0456">Lyase</keyword>
<keyword id="KW-1185">Reference proteome</keyword>
<keyword id="KW-0822">Tryptophan biosynthesis</keyword>
<name>TRPC_RUMCH</name>
<proteinExistence type="inferred from homology"/>
<sequence length="260" mass="28230">MILDKIAASTKIRVENLKKEVSFSFVKSEASKLVNKSPFAFEKAVKDGELTFICEIKKASPSKGLISENFPYIDIAKDYEAAGAGAISVLTEPEFFLGSDQYLKDVKKTVSIPVLRKDFTIDPYQIYEAALIGADCVLLICALLDTDTLKEYIKIADGLGLSCLVEAHDENEVKSAIEAGSRIVGVNNRNLKTFEVDITNSIRLRELVPSDISFVSESGIRTAQDISALRRIGASAVLIGETLMRSGDTGAELAKLRGSA</sequence>
<evidence type="ECO:0000255" key="1">
    <source>
        <dbReference type="HAMAP-Rule" id="MF_00134"/>
    </source>
</evidence>
<comment type="catalytic activity">
    <reaction evidence="1">
        <text>1-(2-carboxyphenylamino)-1-deoxy-D-ribulose 5-phosphate + H(+) = (1S,2R)-1-C-(indol-3-yl)glycerol 3-phosphate + CO2 + H2O</text>
        <dbReference type="Rhea" id="RHEA:23476"/>
        <dbReference type="ChEBI" id="CHEBI:15377"/>
        <dbReference type="ChEBI" id="CHEBI:15378"/>
        <dbReference type="ChEBI" id="CHEBI:16526"/>
        <dbReference type="ChEBI" id="CHEBI:58613"/>
        <dbReference type="ChEBI" id="CHEBI:58866"/>
        <dbReference type="EC" id="4.1.1.48"/>
    </reaction>
</comment>
<comment type="pathway">
    <text evidence="1">Amino-acid biosynthesis; L-tryptophan biosynthesis; L-tryptophan from chorismate: step 4/5.</text>
</comment>
<comment type="similarity">
    <text evidence="1">Belongs to the TrpC family.</text>
</comment>